<feature type="chain" id="PRO_0000200668" description="Ornithine cyclodeaminase">
    <location>
        <begin position="1"/>
        <end position="356"/>
    </location>
</feature>
<feature type="active site" description="Proton donor/acceptor" evidence="1">
    <location>
        <position position="235"/>
    </location>
</feature>
<feature type="binding site" evidence="1">
    <location>
        <position position="53"/>
    </location>
    <ligand>
        <name>L-ornithine</name>
        <dbReference type="ChEBI" id="CHEBI:46911"/>
    </ligand>
</feature>
<feature type="binding site" evidence="1">
    <location>
        <position position="77"/>
    </location>
    <ligand>
        <name>L-ornithine</name>
        <dbReference type="ChEBI" id="CHEBI:46911"/>
    </ligand>
</feature>
<feature type="binding site" evidence="1">
    <location>
        <position position="92"/>
    </location>
    <ligand>
        <name>NAD(+)</name>
        <dbReference type="ChEBI" id="CHEBI:57540"/>
    </ligand>
</feature>
<feature type="binding site" evidence="1">
    <location>
        <position position="120"/>
    </location>
    <ligand>
        <name>L-ornithine</name>
        <dbReference type="ChEBI" id="CHEBI:46911"/>
    </ligand>
</feature>
<feature type="binding site" evidence="1">
    <location>
        <position position="120"/>
    </location>
    <ligand>
        <name>NAD(+)</name>
        <dbReference type="ChEBI" id="CHEBI:57540"/>
    </ligand>
</feature>
<feature type="binding site" evidence="1">
    <location>
        <begin position="147"/>
        <end position="148"/>
    </location>
    <ligand>
        <name>NAD(+)</name>
        <dbReference type="ChEBI" id="CHEBI:57540"/>
    </ligand>
</feature>
<feature type="binding site" evidence="1">
    <location>
        <position position="169"/>
    </location>
    <ligand>
        <name>NAD(+)</name>
        <dbReference type="ChEBI" id="CHEBI:57540"/>
    </ligand>
</feature>
<feature type="binding site" evidence="1">
    <location>
        <position position="209"/>
    </location>
    <ligand>
        <name>NAD(+)</name>
        <dbReference type="ChEBI" id="CHEBI:57540"/>
    </ligand>
</feature>
<feature type="binding site" evidence="1">
    <location>
        <begin position="232"/>
        <end position="235"/>
    </location>
    <ligand>
        <name>NAD(+)</name>
        <dbReference type="ChEBI" id="CHEBI:57540"/>
    </ligand>
</feature>
<feature type="binding site" evidence="1">
    <location>
        <position position="235"/>
    </location>
    <ligand>
        <name>L-ornithine</name>
        <dbReference type="ChEBI" id="CHEBI:46911"/>
    </ligand>
</feature>
<feature type="binding site" evidence="1">
    <location>
        <position position="239"/>
    </location>
    <ligand>
        <name>NAD(+)</name>
        <dbReference type="ChEBI" id="CHEBI:57540"/>
    </ligand>
</feature>
<feature type="binding site" evidence="1">
    <location>
        <position position="300"/>
    </location>
    <ligand>
        <name>NAD(+)</name>
        <dbReference type="ChEBI" id="CHEBI:57540"/>
    </ligand>
</feature>
<feature type="binding site" evidence="1">
    <location>
        <position position="301"/>
    </location>
    <ligand>
        <name>L-ornithine</name>
        <dbReference type="ChEBI" id="CHEBI:46911"/>
    </ligand>
</feature>
<sequence length="356" mass="39166">MPIDPKLNVVPFISVDHMMKLVLKVGIDTFLTELAAEIEKDFRRWPIFDKKPRVGSHSQDGVIELMPTSDGSLYGFKYVNGHPKNTHQGRQTVTAFGVLSDVGNGYPLLLSEMTILTALRTAATSALAAKYLARPNSKTMAIIGNGAQSEFQARAFRAILGIQKLRLFDIDTSATRKCARNLTGPGFDIVECGSVAEAVEGADVITTVTADKQFATILSDNHVGPGVHINAVGGDCPGKTEISMEVLLRSDIFVEYPPQTWIEGDIQQLPRTHPVTELWQVMTGEKTGRVGDRQITMFDSVGFAIEDFSALRYVRAKITDFEMFTELDLLADPDEPRDLYGMLLRCEKKLEPTAVG</sequence>
<name>OCD_AGRT4</name>
<keyword id="KW-0028">Amino-acid biosynthesis</keyword>
<keyword id="KW-0456">Lyase</keyword>
<keyword id="KW-0520">NAD</keyword>
<keyword id="KW-0614">Plasmid</keyword>
<dbReference type="EC" id="4.3.1.12" evidence="2"/>
<dbReference type="EMBL" id="M24146">
    <property type="protein sequence ID" value="AAA50518.1"/>
    <property type="molecule type" value="Genomic_DNA"/>
</dbReference>
<dbReference type="EMBL" id="Z30328">
    <property type="protein sequence ID" value="CAA82989.1"/>
    <property type="molecule type" value="Genomic_DNA"/>
</dbReference>
<dbReference type="PIR" id="A32049">
    <property type="entry name" value="A32049"/>
</dbReference>
<dbReference type="RefSeq" id="NP_059708.1">
    <property type="nucleotide sequence ID" value="NC_002377.1"/>
</dbReference>
<dbReference type="SMR" id="Q59701"/>
<dbReference type="UniPathway" id="UPA00098">
    <property type="reaction ID" value="UER00357"/>
</dbReference>
<dbReference type="GO" id="GO:0008473">
    <property type="term" value="F:ornithine cyclodeaminase activity"/>
    <property type="evidence" value="ECO:0007669"/>
    <property type="project" value="UniProtKB-EC"/>
</dbReference>
<dbReference type="GO" id="GO:0055129">
    <property type="term" value="P:L-proline biosynthetic process"/>
    <property type="evidence" value="ECO:0007669"/>
    <property type="project" value="UniProtKB-UniPathway"/>
</dbReference>
<dbReference type="Gene3D" id="3.40.50.720">
    <property type="entry name" value="NAD(P)-binding Rossmann-like Domain"/>
    <property type="match status" value="1"/>
</dbReference>
<dbReference type="Gene3D" id="3.30.1780.10">
    <property type="entry name" value="ornithine cyclodeaminase, domain 1"/>
    <property type="match status" value="1"/>
</dbReference>
<dbReference type="InterPro" id="IPR036291">
    <property type="entry name" value="NAD(P)-bd_dom_sf"/>
</dbReference>
<dbReference type="InterPro" id="IPR003462">
    <property type="entry name" value="ODC_Mu_crystall"/>
</dbReference>
<dbReference type="InterPro" id="IPR023401">
    <property type="entry name" value="ODC_N"/>
</dbReference>
<dbReference type="NCBIfam" id="NF005762">
    <property type="entry name" value="PRK07589.1"/>
    <property type="match status" value="1"/>
</dbReference>
<dbReference type="PANTHER" id="PTHR13812">
    <property type="entry name" value="KETIMINE REDUCTASE MU-CRYSTALLIN"/>
    <property type="match status" value="1"/>
</dbReference>
<dbReference type="PANTHER" id="PTHR13812:SF19">
    <property type="entry name" value="KETIMINE REDUCTASE MU-CRYSTALLIN"/>
    <property type="match status" value="1"/>
</dbReference>
<dbReference type="Pfam" id="PF02423">
    <property type="entry name" value="OCD_Mu_crystall"/>
    <property type="match status" value="1"/>
</dbReference>
<dbReference type="SUPFAM" id="SSF51735">
    <property type="entry name" value="NAD(P)-binding Rossmann-fold domains"/>
    <property type="match status" value="1"/>
</dbReference>
<accession>Q59701</accession>
<organism>
    <name type="scientific">Agrobacterium tumefaciens (strain Ach5)</name>
    <dbReference type="NCBI Taxonomy" id="176298"/>
    <lineage>
        <taxon>Bacteria</taxon>
        <taxon>Pseudomonadati</taxon>
        <taxon>Pseudomonadota</taxon>
        <taxon>Alphaproteobacteria</taxon>
        <taxon>Hyphomicrobiales</taxon>
        <taxon>Rhizobiaceae</taxon>
        <taxon>Rhizobium/Agrobacterium group</taxon>
        <taxon>Agrobacterium</taxon>
        <taxon>Agrobacterium tumefaciens complex</taxon>
    </lineage>
</organism>
<proteinExistence type="evidence at protein level"/>
<gene>
    <name evidence="3" type="primary">ocd</name>
</gene>
<geneLocation type="plasmid">
    <name>pTiAch5</name>
</geneLocation>
<evidence type="ECO:0000250" key="1">
    <source>
        <dbReference type="UniProtKB" id="Q88H32"/>
    </source>
</evidence>
<evidence type="ECO:0000269" key="2">
    <source>
    </source>
</evidence>
<evidence type="ECO:0000303" key="3">
    <source>
    </source>
</evidence>
<evidence type="ECO:0000305" key="4"/>
<comment type="function">
    <text evidence="2">Catalyzes the conversion of L-ornithine into L-proline with release of ammonia. Is involved in the utilization of octopine, a catabolic pathway that proceeds through L-arginine and L-ornithine to L-proline. Octopine is a predominant opine in plant cells transformed with Ti plasmid pTiAch5.</text>
</comment>
<comment type="catalytic activity">
    <reaction evidence="2">
        <text>L-ornithine = L-proline + NH4(+)</text>
        <dbReference type="Rhea" id="RHEA:24368"/>
        <dbReference type="ChEBI" id="CHEBI:28938"/>
        <dbReference type="ChEBI" id="CHEBI:46911"/>
        <dbReference type="ChEBI" id="CHEBI:60039"/>
        <dbReference type="EC" id="4.3.1.12"/>
    </reaction>
</comment>
<comment type="cofactor">
    <cofactor evidence="2">
        <name>NAD(+)</name>
        <dbReference type="ChEBI" id="CHEBI:57540"/>
    </cofactor>
</comment>
<comment type="activity regulation">
    <text evidence="2">Is inhibited by L-proline and L-lysine. Is not activated by small concentrations of L-arginine, and is even inhibited by about 50% at 0.5 mM L-arginine.</text>
</comment>
<comment type="biophysicochemical properties">
    <kinetics>
        <KM evidence="2">0.25 mM for L-ornithine</KM>
        <KM evidence="2">7.5 uM for NAD(+)</KM>
    </kinetics>
    <phDependence>
        <text evidence="2">Optimum pH is 8.0-8.5.</text>
    </phDependence>
    <temperatureDependence>
        <text evidence="2">Optimum temperature is 30-35 degrees Celsius.</text>
    </temperatureDependence>
</comment>
<comment type="pathway">
    <text evidence="2">Amino-acid biosynthesis; L-proline biosynthesis; L-proline from L-ornithine: step 1/1.</text>
</comment>
<comment type="induction">
    <text evidence="2">Is induced by octopine. Is part of the occ operon.</text>
</comment>
<comment type="similarity">
    <text evidence="4">Belongs to the ornithine cyclodeaminase/mu-crystallin family.</text>
</comment>
<protein>
    <recommendedName>
        <fullName evidence="3">Ornithine cyclodeaminase</fullName>
        <shortName evidence="3">OCD</shortName>
        <ecNumber evidence="2">4.3.1.12</ecNumber>
    </recommendedName>
</protein>
<reference key="1">
    <citation type="journal article" date="1989" name="J. Bacteriol.">
        <title>Ornithine cyclodeaminase from octopine Ti plasmid Ach5: identification, DNA sequence, enzyme properties, and comparison with gene and enzyme from nopaline Ti plasmid C58.</title>
        <authorList>
            <person name="Schindler U."/>
            <person name="Sans N."/>
            <person name="Schroeder J."/>
        </authorList>
    </citation>
    <scope>NUCLEOTIDE SEQUENCE [GENOMIC DNA]</scope>
    <scope>FUNCTION</scope>
    <scope>CATALYTIC ACTIVITY</scope>
    <scope>COFACTOR</scope>
    <scope>BIOPHYSICOCHEMICAL PROPERTIES</scope>
    <scope>INDUCTION</scope>
    <scope>ACTIVITY REGULATION</scope>
    <scope>PATHWAY</scope>
</reference>
<reference key="2">
    <citation type="book" date="1992" name="Guanidino compounds in biology and medicine">
        <title>Catabolism of the guanidino compounds nopaline, octopine, and L-arginine in Agrobacterium tumefaciens: enzymes, genes, and regulation.</title>
        <editorList>
            <person name="De Deyn P.P."/>
            <person name="Marescau B."/>
            <person name="Stalon V."/>
            <person name="Qureshi I.A."/>
        </editorList>
        <authorList>
            <person name="Schroeder J."/>
            <person name="von Lintig J."/>
            <person name="Zanker H."/>
        </authorList>
    </citation>
    <scope>NUCLEOTIDE SEQUENCE [GENOMIC DNA]</scope>
</reference>